<accession>A7ZSW3</accession>
<proteinExistence type="inferred from homology"/>
<gene>
    <name evidence="1" type="primary">glgC</name>
    <name type="ordered locus">EcE24377A_3909</name>
</gene>
<organism>
    <name type="scientific">Escherichia coli O139:H28 (strain E24377A / ETEC)</name>
    <dbReference type="NCBI Taxonomy" id="331111"/>
    <lineage>
        <taxon>Bacteria</taxon>
        <taxon>Pseudomonadati</taxon>
        <taxon>Pseudomonadota</taxon>
        <taxon>Gammaproteobacteria</taxon>
        <taxon>Enterobacterales</taxon>
        <taxon>Enterobacteriaceae</taxon>
        <taxon>Escherichia</taxon>
    </lineage>
</organism>
<name>GLGC_ECO24</name>
<sequence>MVSLEKNDHLMLARQLPLKSVALILAGGRGTRLKDLTNKRAKPAVHFGGKFRIIDFALSNCINSGIRRMGVITQYQSHTLVQHIQRGWSFFNEEMNEFVDLLPAQQRMKGENWYRGTADAVTQNLDIIRRYKAEYVVILAGDHIYKQDYSRMLIDHVEKGARCTVACMPVPIEEASAFGVMAVDENDKIIEFVEKPANPPSMPNDPSKSLASMGIYVFDADYLYELLEEDDRDENSSHDFGKDLIPKITEAGLAYAHPFPLSCVQSDPDAEPYWRDVGTLEAYWKANLDLASVVPELDMYDRNWPIRTYNESLPPAKFVQDRSGSHGMTLNSLVSGGCVISGSVVVQSVLFSRVRVNSFCNIDSAVLLPEVWVGRSCRLRRCVIDRACVIPEGMVIGENAEEDARRFYRSEEGIVLVTREMLRKLGHKQER</sequence>
<protein>
    <recommendedName>
        <fullName evidence="1">Glucose-1-phosphate adenylyltransferase</fullName>
        <ecNumber evidence="1">2.7.7.27</ecNumber>
    </recommendedName>
    <alternativeName>
        <fullName evidence="1">ADP-glucose pyrophosphorylase</fullName>
        <shortName evidence="1">ADPGlc PPase</shortName>
    </alternativeName>
    <alternativeName>
        <fullName evidence="1">ADP-glucose synthase</fullName>
    </alternativeName>
</protein>
<comment type="function">
    <text evidence="1">Involved in the biosynthesis of ADP-glucose, a building block required for the elongation reactions to produce glycogen. Catalyzes the reaction between ATP and alpha-D-glucose 1-phosphate (G1P) to produce pyrophosphate and ADP-Glc.</text>
</comment>
<comment type="catalytic activity">
    <reaction evidence="1">
        <text>alpha-D-glucose 1-phosphate + ATP + H(+) = ADP-alpha-D-glucose + diphosphate</text>
        <dbReference type="Rhea" id="RHEA:12120"/>
        <dbReference type="ChEBI" id="CHEBI:15378"/>
        <dbReference type="ChEBI" id="CHEBI:30616"/>
        <dbReference type="ChEBI" id="CHEBI:33019"/>
        <dbReference type="ChEBI" id="CHEBI:57498"/>
        <dbReference type="ChEBI" id="CHEBI:58601"/>
        <dbReference type="EC" id="2.7.7.27"/>
    </reaction>
</comment>
<comment type="activity regulation">
    <text evidence="1">Allosterically activated by fructose-1,6-bisphosphate (F16BP) and inhibited by AMP.</text>
</comment>
<comment type="pathway">
    <text evidence="1">Glycan biosynthesis; glycogen biosynthesis.</text>
</comment>
<comment type="subunit">
    <text evidence="1">Homotetramer.</text>
</comment>
<comment type="similarity">
    <text evidence="1">Belongs to the bacterial/plant glucose-1-phosphate adenylyltransferase family.</text>
</comment>
<evidence type="ECO:0000255" key="1">
    <source>
        <dbReference type="HAMAP-Rule" id="MF_00624"/>
    </source>
</evidence>
<feature type="chain" id="PRO_1000061383" description="Glucose-1-phosphate adenylyltransferase">
    <location>
        <begin position="1"/>
        <end position="431"/>
    </location>
</feature>
<feature type="binding site" evidence="1">
    <location>
        <position position="39"/>
    </location>
    <ligand>
        <name>beta-D-fructose 1,6-bisphosphate</name>
        <dbReference type="ChEBI" id="CHEBI:32966"/>
    </ligand>
</feature>
<feature type="binding site" evidence="1">
    <location>
        <position position="40"/>
    </location>
    <ligand>
        <name>AMP</name>
        <dbReference type="ChEBI" id="CHEBI:456215"/>
    </ligand>
</feature>
<feature type="binding site" evidence="1">
    <location>
        <position position="46"/>
    </location>
    <ligand>
        <name>AMP</name>
        <dbReference type="ChEBI" id="CHEBI:456215"/>
    </ligand>
</feature>
<feature type="binding site" evidence="1">
    <location>
        <position position="52"/>
    </location>
    <ligand>
        <name>AMP</name>
        <dbReference type="ChEBI" id="CHEBI:456215"/>
    </ligand>
</feature>
<feature type="binding site" evidence="1">
    <location>
        <position position="114"/>
    </location>
    <ligand>
        <name>alpha-D-glucose 1-phosphate</name>
        <dbReference type="ChEBI" id="CHEBI:58601"/>
    </ligand>
</feature>
<feature type="binding site" evidence="1">
    <location>
        <position position="130"/>
    </location>
    <ligand>
        <name>AMP</name>
        <dbReference type="ChEBI" id="CHEBI:456215"/>
    </ligand>
</feature>
<feature type="binding site" evidence="1">
    <location>
        <position position="179"/>
    </location>
    <ligand>
        <name>alpha-D-glucose 1-phosphate</name>
        <dbReference type="ChEBI" id="CHEBI:58601"/>
    </ligand>
</feature>
<feature type="binding site" evidence="1">
    <location>
        <begin position="194"/>
        <end position="195"/>
    </location>
    <ligand>
        <name>alpha-D-glucose 1-phosphate</name>
        <dbReference type="ChEBI" id="CHEBI:58601"/>
    </ligand>
</feature>
<feature type="binding site" evidence="1">
    <location>
        <position position="212"/>
    </location>
    <ligand>
        <name>alpha-D-glucose 1-phosphate</name>
        <dbReference type="ChEBI" id="CHEBI:58601"/>
    </ligand>
</feature>
<feature type="binding site" evidence="1">
    <location>
        <position position="370"/>
    </location>
    <ligand>
        <name>AMP</name>
        <dbReference type="ChEBI" id="CHEBI:456215"/>
    </ligand>
</feature>
<feature type="binding site" evidence="1">
    <location>
        <position position="386"/>
    </location>
    <ligand>
        <name>AMP</name>
        <dbReference type="ChEBI" id="CHEBI:456215"/>
    </ligand>
</feature>
<feature type="binding site" evidence="1">
    <location>
        <begin position="419"/>
        <end position="423"/>
    </location>
    <ligand>
        <name>beta-D-fructose 1,6-bisphosphate</name>
        <dbReference type="ChEBI" id="CHEBI:32966"/>
    </ligand>
</feature>
<feature type="binding site" evidence="1">
    <location>
        <begin position="429"/>
        <end position="431"/>
    </location>
    <ligand>
        <name>beta-D-fructose 1,6-bisphosphate</name>
        <dbReference type="ChEBI" id="CHEBI:32966"/>
    </ligand>
</feature>
<feature type="site" description="Could play a key role in the communication between the regulatory and the substrate sites" evidence="1">
    <location>
        <position position="74"/>
    </location>
</feature>
<feature type="site" description="Could play a key role in the communication between the regulatory and the substrate sites" evidence="1">
    <location>
        <position position="113"/>
    </location>
</feature>
<dbReference type="EC" id="2.7.7.27" evidence="1"/>
<dbReference type="EMBL" id="CP000800">
    <property type="protein sequence ID" value="ABV20064.1"/>
    <property type="molecule type" value="Genomic_DNA"/>
</dbReference>
<dbReference type="RefSeq" id="WP_000253975.1">
    <property type="nucleotide sequence ID" value="NC_009801.1"/>
</dbReference>
<dbReference type="SMR" id="A7ZSW3"/>
<dbReference type="GeneID" id="93778559"/>
<dbReference type="KEGG" id="ecw:EcE24377A_3909"/>
<dbReference type="HOGENOM" id="CLU_029499_14_1_6"/>
<dbReference type="UniPathway" id="UPA00164"/>
<dbReference type="Proteomes" id="UP000001122">
    <property type="component" value="Chromosome"/>
</dbReference>
<dbReference type="GO" id="GO:0005524">
    <property type="term" value="F:ATP binding"/>
    <property type="evidence" value="ECO:0007669"/>
    <property type="project" value="UniProtKB-KW"/>
</dbReference>
<dbReference type="GO" id="GO:0008878">
    <property type="term" value="F:glucose-1-phosphate adenylyltransferase activity"/>
    <property type="evidence" value="ECO:0007669"/>
    <property type="project" value="UniProtKB-UniRule"/>
</dbReference>
<dbReference type="GO" id="GO:0005978">
    <property type="term" value="P:glycogen biosynthetic process"/>
    <property type="evidence" value="ECO:0007669"/>
    <property type="project" value="UniProtKB-UniRule"/>
</dbReference>
<dbReference type="CDD" id="cd02508">
    <property type="entry name" value="ADP_Glucose_PP"/>
    <property type="match status" value="1"/>
</dbReference>
<dbReference type="CDD" id="cd04651">
    <property type="entry name" value="LbH_G1P_AT_C"/>
    <property type="match status" value="1"/>
</dbReference>
<dbReference type="FunFam" id="2.160.10.10:FF:000006">
    <property type="entry name" value="Glucose-1-phosphate adenylyltransferase"/>
    <property type="match status" value="1"/>
</dbReference>
<dbReference type="FunFam" id="3.90.550.10:FF:000014">
    <property type="entry name" value="Glucose-1-phosphate adenylyltransferase"/>
    <property type="match status" value="1"/>
</dbReference>
<dbReference type="Gene3D" id="2.160.10.10">
    <property type="entry name" value="Hexapeptide repeat proteins"/>
    <property type="match status" value="1"/>
</dbReference>
<dbReference type="Gene3D" id="3.90.550.10">
    <property type="entry name" value="Spore Coat Polysaccharide Biosynthesis Protein SpsA, Chain A"/>
    <property type="match status" value="1"/>
</dbReference>
<dbReference type="HAMAP" id="MF_00624">
    <property type="entry name" value="GlgC"/>
    <property type="match status" value="1"/>
</dbReference>
<dbReference type="InterPro" id="IPR011831">
    <property type="entry name" value="ADP-Glc_PPase"/>
</dbReference>
<dbReference type="InterPro" id="IPR005836">
    <property type="entry name" value="ADP_Glu_pyroP_CS"/>
</dbReference>
<dbReference type="InterPro" id="IPR023049">
    <property type="entry name" value="GlgC_bac"/>
</dbReference>
<dbReference type="InterPro" id="IPR056818">
    <property type="entry name" value="GlmU/GlgC-like_hexapep"/>
</dbReference>
<dbReference type="InterPro" id="IPR005835">
    <property type="entry name" value="NTP_transferase_dom"/>
</dbReference>
<dbReference type="InterPro" id="IPR029044">
    <property type="entry name" value="Nucleotide-diphossugar_trans"/>
</dbReference>
<dbReference type="InterPro" id="IPR011004">
    <property type="entry name" value="Trimer_LpxA-like_sf"/>
</dbReference>
<dbReference type="NCBIfam" id="TIGR02091">
    <property type="entry name" value="glgC"/>
    <property type="match status" value="1"/>
</dbReference>
<dbReference type="NCBIfam" id="NF001947">
    <property type="entry name" value="PRK00725.1"/>
    <property type="match status" value="1"/>
</dbReference>
<dbReference type="NCBIfam" id="NF002023">
    <property type="entry name" value="PRK00844.1"/>
    <property type="match status" value="1"/>
</dbReference>
<dbReference type="PANTHER" id="PTHR43523:SF2">
    <property type="entry name" value="GLUCOSE-1-PHOSPHATE ADENYLYLTRANSFERASE"/>
    <property type="match status" value="1"/>
</dbReference>
<dbReference type="PANTHER" id="PTHR43523">
    <property type="entry name" value="GLUCOSE-1-PHOSPHATE ADENYLYLTRANSFERASE-RELATED"/>
    <property type="match status" value="1"/>
</dbReference>
<dbReference type="Pfam" id="PF24894">
    <property type="entry name" value="Hexapep_GlmU"/>
    <property type="match status" value="1"/>
</dbReference>
<dbReference type="Pfam" id="PF00483">
    <property type="entry name" value="NTP_transferase"/>
    <property type="match status" value="1"/>
</dbReference>
<dbReference type="SUPFAM" id="SSF53448">
    <property type="entry name" value="Nucleotide-diphospho-sugar transferases"/>
    <property type="match status" value="1"/>
</dbReference>
<dbReference type="SUPFAM" id="SSF51161">
    <property type="entry name" value="Trimeric LpxA-like enzymes"/>
    <property type="match status" value="1"/>
</dbReference>
<dbReference type="PROSITE" id="PS00808">
    <property type="entry name" value="ADP_GLC_PYROPHOSPH_1"/>
    <property type="match status" value="1"/>
</dbReference>
<dbReference type="PROSITE" id="PS00809">
    <property type="entry name" value="ADP_GLC_PYROPHOSPH_2"/>
    <property type="match status" value="1"/>
</dbReference>
<dbReference type="PROSITE" id="PS00810">
    <property type="entry name" value="ADP_GLC_PYROPHOSPH_3"/>
    <property type="match status" value="1"/>
</dbReference>
<keyword id="KW-0021">Allosteric enzyme</keyword>
<keyword id="KW-0067">ATP-binding</keyword>
<keyword id="KW-0119">Carbohydrate metabolism</keyword>
<keyword id="KW-0320">Glycogen biosynthesis</keyword>
<keyword id="KW-0321">Glycogen metabolism</keyword>
<keyword id="KW-0547">Nucleotide-binding</keyword>
<keyword id="KW-0548">Nucleotidyltransferase</keyword>
<keyword id="KW-1185">Reference proteome</keyword>
<keyword id="KW-0808">Transferase</keyword>
<reference key="1">
    <citation type="journal article" date="2008" name="J. Bacteriol.">
        <title>The pangenome structure of Escherichia coli: comparative genomic analysis of E. coli commensal and pathogenic isolates.</title>
        <authorList>
            <person name="Rasko D.A."/>
            <person name="Rosovitz M.J."/>
            <person name="Myers G.S.A."/>
            <person name="Mongodin E.F."/>
            <person name="Fricke W.F."/>
            <person name="Gajer P."/>
            <person name="Crabtree J."/>
            <person name="Sebaihia M."/>
            <person name="Thomson N.R."/>
            <person name="Chaudhuri R."/>
            <person name="Henderson I.R."/>
            <person name="Sperandio V."/>
            <person name="Ravel J."/>
        </authorList>
    </citation>
    <scope>NUCLEOTIDE SEQUENCE [LARGE SCALE GENOMIC DNA]</scope>
    <source>
        <strain>E24377A / ETEC</strain>
    </source>
</reference>